<proteinExistence type="inferred from homology"/>
<organism>
    <name type="scientific">Trichlorobacter lovleyi (strain ATCC BAA-1151 / DSM 17278 / SZ)</name>
    <name type="common">Geobacter lovleyi</name>
    <dbReference type="NCBI Taxonomy" id="398767"/>
    <lineage>
        <taxon>Bacteria</taxon>
        <taxon>Pseudomonadati</taxon>
        <taxon>Thermodesulfobacteriota</taxon>
        <taxon>Desulfuromonadia</taxon>
        <taxon>Geobacterales</taxon>
        <taxon>Geobacteraceae</taxon>
        <taxon>Trichlorobacter</taxon>
    </lineage>
</organism>
<sequence length="197" mass="21773">MYVPMVVEQSGRGERAYDIYSRLLKERIVFLGGEINDQVADLVIAQLLFLEAEDPDKDIHLYINSPGGVVTAGMAIFDTMNYIKAPVSTICIGQAASMGAVLLTAGEKGKRFALPHARIMIHQPSGGSRGQATDIMIQAEEILRMKRELNRLLADLSGQPVERLEQDTERDFFMSAEEARNYGLIDAVMTRRPDGGD</sequence>
<name>CLPP_TRIL1</name>
<comment type="function">
    <text evidence="1">Cleaves peptides in various proteins in a process that requires ATP hydrolysis. Has a chymotrypsin-like activity. Plays a major role in the degradation of misfolded proteins.</text>
</comment>
<comment type="catalytic activity">
    <reaction evidence="1">
        <text>Hydrolysis of proteins to small peptides in the presence of ATP and magnesium. alpha-casein is the usual test substrate. In the absence of ATP, only oligopeptides shorter than five residues are hydrolyzed (such as succinyl-Leu-Tyr-|-NHMec, and Leu-Tyr-Leu-|-Tyr-Trp, in which cleavage of the -Tyr-|-Leu- and -Tyr-|-Trp bonds also occurs).</text>
        <dbReference type="EC" id="3.4.21.92"/>
    </reaction>
</comment>
<comment type="subunit">
    <text evidence="1">Fourteen ClpP subunits assemble into 2 heptameric rings which stack back to back to give a disk-like structure with a central cavity, resembling the structure of eukaryotic proteasomes.</text>
</comment>
<comment type="subcellular location">
    <subcellularLocation>
        <location evidence="1">Cytoplasm</location>
    </subcellularLocation>
</comment>
<comment type="similarity">
    <text evidence="1">Belongs to the peptidase S14 family.</text>
</comment>
<evidence type="ECO:0000255" key="1">
    <source>
        <dbReference type="HAMAP-Rule" id="MF_00444"/>
    </source>
</evidence>
<protein>
    <recommendedName>
        <fullName evidence="1">ATP-dependent Clp protease proteolytic subunit</fullName>
        <ecNumber evidence="1">3.4.21.92</ecNumber>
    </recommendedName>
    <alternativeName>
        <fullName evidence="1">Endopeptidase Clp</fullName>
    </alternativeName>
</protein>
<feature type="chain" id="PRO_1000189645" description="ATP-dependent Clp protease proteolytic subunit">
    <location>
        <begin position="1"/>
        <end position="197"/>
    </location>
</feature>
<feature type="active site" description="Nucleophile" evidence="1">
    <location>
        <position position="97"/>
    </location>
</feature>
<feature type="active site" evidence="1">
    <location>
        <position position="122"/>
    </location>
</feature>
<gene>
    <name evidence="1" type="primary">clpP</name>
    <name type="ordered locus">Glov_1928</name>
</gene>
<dbReference type="EC" id="3.4.21.92" evidence="1"/>
<dbReference type="EMBL" id="CP001089">
    <property type="protein sequence ID" value="ACD95644.1"/>
    <property type="molecule type" value="Genomic_DNA"/>
</dbReference>
<dbReference type="RefSeq" id="WP_012469983.1">
    <property type="nucleotide sequence ID" value="NC_010814.1"/>
</dbReference>
<dbReference type="SMR" id="B3E1Z4"/>
<dbReference type="STRING" id="398767.Glov_1928"/>
<dbReference type="MEROPS" id="S14.001"/>
<dbReference type="KEGG" id="glo:Glov_1928"/>
<dbReference type="eggNOG" id="COG0740">
    <property type="taxonomic scope" value="Bacteria"/>
</dbReference>
<dbReference type="HOGENOM" id="CLU_058707_3_2_7"/>
<dbReference type="OrthoDB" id="9802800at2"/>
<dbReference type="Proteomes" id="UP000002420">
    <property type="component" value="Chromosome"/>
</dbReference>
<dbReference type="GO" id="GO:0005737">
    <property type="term" value="C:cytoplasm"/>
    <property type="evidence" value="ECO:0007669"/>
    <property type="project" value="UniProtKB-SubCell"/>
</dbReference>
<dbReference type="GO" id="GO:0009368">
    <property type="term" value="C:endopeptidase Clp complex"/>
    <property type="evidence" value="ECO:0007669"/>
    <property type="project" value="TreeGrafter"/>
</dbReference>
<dbReference type="GO" id="GO:0004176">
    <property type="term" value="F:ATP-dependent peptidase activity"/>
    <property type="evidence" value="ECO:0007669"/>
    <property type="project" value="InterPro"/>
</dbReference>
<dbReference type="GO" id="GO:0051117">
    <property type="term" value="F:ATPase binding"/>
    <property type="evidence" value="ECO:0007669"/>
    <property type="project" value="TreeGrafter"/>
</dbReference>
<dbReference type="GO" id="GO:0004252">
    <property type="term" value="F:serine-type endopeptidase activity"/>
    <property type="evidence" value="ECO:0007669"/>
    <property type="project" value="UniProtKB-UniRule"/>
</dbReference>
<dbReference type="GO" id="GO:0006515">
    <property type="term" value="P:protein quality control for misfolded or incompletely synthesized proteins"/>
    <property type="evidence" value="ECO:0007669"/>
    <property type="project" value="TreeGrafter"/>
</dbReference>
<dbReference type="CDD" id="cd07017">
    <property type="entry name" value="S14_ClpP_2"/>
    <property type="match status" value="1"/>
</dbReference>
<dbReference type="FunFam" id="3.90.226.10:FF:000001">
    <property type="entry name" value="ATP-dependent Clp protease proteolytic subunit"/>
    <property type="match status" value="1"/>
</dbReference>
<dbReference type="Gene3D" id="3.90.226.10">
    <property type="entry name" value="2-enoyl-CoA Hydratase, Chain A, domain 1"/>
    <property type="match status" value="1"/>
</dbReference>
<dbReference type="HAMAP" id="MF_00444">
    <property type="entry name" value="ClpP"/>
    <property type="match status" value="1"/>
</dbReference>
<dbReference type="InterPro" id="IPR001907">
    <property type="entry name" value="ClpP"/>
</dbReference>
<dbReference type="InterPro" id="IPR029045">
    <property type="entry name" value="ClpP/crotonase-like_dom_sf"/>
</dbReference>
<dbReference type="InterPro" id="IPR023562">
    <property type="entry name" value="ClpP/TepA"/>
</dbReference>
<dbReference type="InterPro" id="IPR033135">
    <property type="entry name" value="ClpP_His_AS"/>
</dbReference>
<dbReference type="InterPro" id="IPR018215">
    <property type="entry name" value="ClpP_Ser_AS"/>
</dbReference>
<dbReference type="NCBIfam" id="TIGR00493">
    <property type="entry name" value="clpP"/>
    <property type="match status" value="1"/>
</dbReference>
<dbReference type="NCBIfam" id="NF001368">
    <property type="entry name" value="PRK00277.1"/>
    <property type="match status" value="1"/>
</dbReference>
<dbReference type="NCBIfam" id="NF009205">
    <property type="entry name" value="PRK12553.1"/>
    <property type="match status" value="1"/>
</dbReference>
<dbReference type="PANTHER" id="PTHR10381">
    <property type="entry name" value="ATP-DEPENDENT CLP PROTEASE PROTEOLYTIC SUBUNIT"/>
    <property type="match status" value="1"/>
</dbReference>
<dbReference type="PANTHER" id="PTHR10381:SF70">
    <property type="entry name" value="ATP-DEPENDENT CLP PROTEASE PROTEOLYTIC SUBUNIT"/>
    <property type="match status" value="1"/>
</dbReference>
<dbReference type="Pfam" id="PF00574">
    <property type="entry name" value="CLP_protease"/>
    <property type="match status" value="1"/>
</dbReference>
<dbReference type="PRINTS" id="PR00127">
    <property type="entry name" value="CLPPROTEASEP"/>
</dbReference>
<dbReference type="SUPFAM" id="SSF52096">
    <property type="entry name" value="ClpP/crotonase"/>
    <property type="match status" value="1"/>
</dbReference>
<dbReference type="PROSITE" id="PS00382">
    <property type="entry name" value="CLP_PROTEASE_HIS"/>
    <property type="match status" value="1"/>
</dbReference>
<dbReference type="PROSITE" id="PS00381">
    <property type="entry name" value="CLP_PROTEASE_SER"/>
    <property type="match status" value="1"/>
</dbReference>
<accession>B3E1Z4</accession>
<keyword id="KW-0963">Cytoplasm</keyword>
<keyword id="KW-0378">Hydrolase</keyword>
<keyword id="KW-0645">Protease</keyword>
<keyword id="KW-1185">Reference proteome</keyword>
<keyword id="KW-0720">Serine protease</keyword>
<reference key="1">
    <citation type="submission" date="2008-05" db="EMBL/GenBank/DDBJ databases">
        <title>Complete sequence of chromosome of Geobacter lovleyi SZ.</title>
        <authorList>
            <consortium name="US DOE Joint Genome Institute"/>
            <person name="Lucas S."/>
            <person name="Copeland A."/>
            <person name="Lapidus A."/>
            <person name="Glavina del Rio T."/>
            <person name="Dalin E."/>
            <person name="Tice H."/>
            <person name="Bruce D."/>
            <person name="Goodwin L."/>
            <person name="Pitluck S."/>
            <person name="Chertkov O."/>
            <person name="Meincke L."/>
            <person name="Brettin T."/>
            <person name="Detter J.C."/>
            <person name="Han C."/>
            <person name="Tapia R."/>
            <person name="Kuske C.R."/>
            <person name="Schmutz J."/>
            <person name="Larimer F."/>
            <person name="Land M."/>
            <person name="Hauser L."/>
            <person name="Kyrpides N."/>
            <person name="Mikhailova N."/>
            <person name="Sung Y."/>
            <person name="Fletcher K.E."/>
            <person name="Ritalahti K.M."/>
            <person name="Loeffler F.E."/>
            <person name="Richardson P."/>
        </authorList>
    </citation>
    <scope>NUCLEOTIDE SEQUENCE [LARGE SCALE GENOMIC DNA]</scope>
    <source>
        <strain>ATCC BAA-1151 / DSM 17278 / SZ</strain>
    </source>
</reference>